<comment type="function">
    <text evidence="1">Located at the top of the head of the 30S subunit, it contacts several helices of the 16S rRNA. In the 70S ribosome it contacts the 23S rRNA (bridge B1a) and protein L5 of the 50S subunit (bridge B1b), connecting the 2 subunits; these bridges are implicated in subunit movement. Contacts the tRNAs in the A and P-sites.</text>
</comment>
<comment type="subunit">
    <text evidence="1">Part of the 30S ribosomal subunit. Forms a loose heterodimer with protein S19. Forms two bridges to the 50S subunit in the 70S ribosome.</text>
</comment>
<comment type="similarity">
    <text evidence="1">Belongs to the universal ribosomal protein uS13 family.</text>
</comment>
<reference key="1">
    <citation type="journal article" date="2003" name="Proc. Natl. Acad. Sci. U.S.A.">
        <title>Complete genome sequence and analysis of Wolinella succinogenes.</title>
        <authorList>
            <person name="Baar C."/>
            <person name="Eppinger M."/>
            <person name="Raddatz G."/>
            <person name="Simon J."/>
            <person name="Lanz C."/>
            <person name="Klimmek O."/>
            <person name="Nandakumar R."/>
            <person name="Gross R."/>
            <person name="Rosinus A."/>
            <person name="Keller H."/>
            <person name="Jagtap P."/>
            <person name="Linke B."/>
            <person name="Meyer F."/>
            <person name="Lederer H."/>
            <person name="Schuster S.C."/>
        </authorList>
    </citation>
    <scope>NUCLEOTIDE SEQUENCE [LARGE SCALE GENOMIC DNA]</scope>
    <source>
        <strain>ATCC 29543 / DSM 1740 / CCUG 13145 / JCM 31913 / LMG 7466 / NCTC 11488 / FDC 602W</strain>
    </source>
</reference>
<name>RS13_WOLSU</name>
<keyword id="KW-1185">Reference proteome</keyword>
<keyword id="KW-0687">Ribonucleoprotein</keyword>
<keyword id="KW-0689">Ribosomal protein</keyword>
<keyword id="KW-0694">RNA-binding</keyword>
<keyword id="KW-0699">rRNA-binding</keyword>
<keyword id="KW-0820">tRNA-binding</keyword>
<sequence length="122" mass="13678">MARIAGVDLPKKKRIEYALTYIYGIGLKTSRDILSAVNISLDKRVQELSEDEVSLISKKIQESYAVEGDLRKKVTMDIKALMDLGSYRGLRHRKGLPVRGQTTKNNARTRKGKRKTVGSASK</sequence>
<feature type="chain" id="PRO_0000230580" description="Small ribosomal subunit protein uS13">
    <location>
        <begin position="1"/>
        <end position="122"/>
    </location>
</feature>
<feature type="region of interest" description="Disordered" evidence="2">
    <location>
        <begin position="93"/>
        <end position="122"/>
    </location>
</feature>
<feature type="compositionally biased region" description="Basic residues" evidence="2">
    <location>
        <begin position="107"/>
        <end position="116"/>
    </location>
</feature>
<protein>
    <recommendedName>
        <fullName evidence="1">Small ribosomal subunit protein uS13</fullName>
    </recommendedName>
    <alternativeName>
        <fullName evidence="3">30S ribosomal protein S13</fullName>
    </alternativeName>
</protein>
<gene>
    <name evidence="1" type="primary">rpsM</name>
    <name type="ordered locus">WS1695</name>
</gene>
<accession>Q7M8F4</accession>
<proteinExistence type="inferred from homology"/>
<dbReference type="EMBL" id="BX571661">
    <property type="protein sequence ID" value="CAE10722.1"/>
    <property type="molecule type" value="Genomic_DNA"/>
</dbReference>
<dbReference type="RefSeq" id="WP_011139506.1">
    <property type="nucleotide sequence ID" value="NC_005090.1"/>
</dbReference>
<dbReference type="SMR" id="Q7M8F4"/>
<dbReference type="STRING" id="273121.WS1695"/>
<dbReference type="KEGG" id="wsu:WS1695"/>
<dbReference type="eggNOG" id="COG0099">
    <property type="taxonomic scope" value="Bacteria"/>
</dbReference>
<dbReference type="HOGENOM" id="CLU_103849_1_2_7"/>
<dbReference type="Proteomes" id="UP000000422">
    <property type="component" value="Chromosome"/>
</dbReference>
<dbReference type="GO" id="GO:0005829">
    <property type="term" value="C:cytosol"/>
    <property type="evidence" value="ECO:0007669"/>
    <property type="project" value="TreeGrafter"/>
</dbReference>
<dbReference type="GO" id="GO:0015935">
    <property type="term" value="C:small ribosomal subunit"/>
    <property type="evidence" value="ECO:0007669"/>
    <property type="project" value="TreeGrafter"/>
</dbReference>
<dbReference type="GO" id="GO:0019843">
    <property type="term" value="F:rRNA binding"/>
    <property type="evidence" value="ECO:0007669"/>
    <property type="project" value="UniProtKB-UniRule"/>
</dbReference>
<dbReference type="GO" id="GO:0003735">
    <property type="term" value="F:structural constituent of ribosome"/>
    <property type="evidence" value="ECO:0007669"/>
    <property type="project" value="InterPro"/>
</dbReference>
<dbReference type="GO" id="GO:0000049">
    <property type="term" value="F:tRNA binding"/>
    <property type="evidence" value="ECO:0007669"/>
    <property type="project" value="UniProtKB-UniRule"/>
</dbReference>
<dbReference type="GO" id="GO:0006412">
    <property type="term" value="P:translation"/>
    <property type="evidence" value="ECO:0007669"/>
    <property type="project" value="UniProtKB-UniRule"/>
</dbReference>
<dbReference type="FunFam" id="1.10.8.50:FF:000001">
    <property type="entry name" value="30S ribosomal protein S13"/>
    <property type="match status" value="1"/>
</dbReference>
<dbReference type="FunFam" id="4.10.910.10:FF:000001">
    <property type="entry name" value="30S ribosomal protein S13"/>
    <property type="match status" value="1"/>
</dbReference>
<dbReference type="Gene3D" id="1.10.8.50">
    <property type="match status" value="1"/>
</dbReference>
<dbReference type="Gene3D" id="4.10.910.10">
    <property type="entry name" value="30s ribosomal protein s13, domain 2"/>
    <property type="match status" value="1"/>
</dbReference>
<dbReference type="HAMAP" id="MF_01315">
    <property type="entry name" value="Ribosomal_uS13"/>
    <property type="match status" value="1"/>
</dbReference>
<dbReference type="InterPro" id="IPR027437">
    <property type="entry name" value="Rbsml_uS13_C"/>
</dbReference>
<dbReference type="InterPro" id="IPR001892">
    <property type="entry name" value="Ribosomal_uS13"/>
</dbReference>
<dbReference type="InterPro" id="IPR010979">
    <property type="entry name" value="Ribosomal_uS13-like_H2TH"/>
</dbReference>
<dbReference type="InterPro" id="IPR019980">
    <property type="entry name" value="Ribosomal_uS13_bac-type"/>
</dbReference>
<dbReference type="InterPro" id="IPR018269">
    <property type="entry name" value="Ribosomal_uS13_CS"/>
</dbReference>
<dbReference type="NCBIfam" id="TIGR03631">
    <property type="entry name" value="uS13_bact"/>
    <property type="match status" value="1"/>
</dbReference>
<dbReference type="PANTHER" id="PTHR10871">
    <property type="entry name" value="30S RIBOSOMAL PROTEIN S13/40S RIBOSOMAL PROTEIN S18"/>
    <property type="match status" value="1"/>
</dbReference>
<dbReference type="PANTHER" id="PTHR10871:SF1">
    <property type="entry name" value="SMALL RIBOSOMAL SUBUNIT PROTEIN US13M"/>
    <property type="match status" value="1"/>
</dbReference>
<dbReference type="Pfam" id="PF00416">
    <property type="entry name" value="Ribosomal_S13"/>
    <property type="match status" value="1"/>
</dbReference>
<dbReference type="PIRSF" id="PIRSF002134">
    <property type="entry name" value="Ribosomal_S13"/>
    <property type="match status" value="1"/>
</dbReference>
<dbReference type="SUPFAM" id="SSF46946">
    <property type="entry name" value="S13-like H2TH domain"/>
    <property type="match status" value="1"/>
</dbReference>
<dbReference type="PROSITE" id="PS00646">
    <property type="entry name" value="RIBOSOMAL_S13_1"/>
    <property type="match status" value="1"/>
</dbReference>
<dbReference type="PROSITE" id="PS50159">
    <property type="entry name" value="RIBOSOMAL_S13_2"/>
    <property type="match status" value="1"/>
</dbReference>
<organism>
    <name type="scientific">Wolinella succinogenes (strain ATCC 29543 / DSM 1740 / CCUG 13145 / JCM 31913 / LMG 7466 / NCTC 11488 / FDC 602W)</name>
    <name type="common">Vibrio succinogenes</name>
    <dbReference type="NCBI Taxonomy" id="273121"/>
    <lineage>
        <taxon>Bacteria</taxon>
        <taxon>Pseudomonadati</taxon>
        <taxon>Campylobacterota</taxon>
        <taxon>Epsilonproteobacteria</taxon>
        <taxon>Campylobacterales</taxon>
        <taxon>Helicobacteraceae</taxon>
        <taxon>Wolinella</taxon>
    </lineage>
</organism>
<evidence type="ECO:0000255" key="1">
    <source>
        <dbReference type="HAMAP-Rule" id="MF_01315"/>
    </source>
</evidence>
<evidence type="ECO:0000256" key="2">
    <source>
        <dbReference type="SAM" id="MobiDB-lite"/>
    </source>
</evidence>
<evidence type="ECO:0000305" key="3"/>